<dbReference type="EMBL" id="AB002397">
    <property type="protein sequence ID" value="BAA22151.1"/>
    <property type="molecule type" value="mRNA"/>
</dbReference>
<dbReference type="EMBL" id="AE014134">
    <property type="protein sequence ID" value="AAF53635.1"/>
    <property type="molecule type" value="Genomic_DNA"/>
</dbReference>
<dbReference type="EMBL" id="AE014134">
    <property type="protein sequence ID" value="AAN10992.1"/>
    <property type="molecule type" value="Genomic_DNA"/>
</dbReference>
<dbReference type="EMBL" id="AE014134">
    <property type="protein sequence ID" value="AAN10993.1"/>
    <property type="molecule type" value="Genomic_DNA"/>
</dbReference>
<dbReference type="EMBL" id="AE014134">
    <property type="protein sequence ID" value="AAN10994.1"/>
    <property type="molecule type" value="Genomic_DNA"/>
</dbReference>
<dbReference type="EMBL" id="AE014134">
    <property type="protein sequence ID" value="AAN10995.1"/>
    <property type="molecule type" value="Genomic_DNA"/>
</dbReference>
<dbReference type="EMBL" id="AE014134">
    <property type="protein sequence ID" value="AAN10996.1"/>
    <property type="molecule type" value="Genomic_DNA"/>
</dbReference>
<dbReference type="EMBL" id="AE014134">
    <property type="protein sequence ID" value="AAN10997.1"/>
    <property type="molecule type" value="Genomic_DNA"/>
</dbReference>
<dbReference type="EMBL" id="AE014134">
    <property type="protein sequence ID" value="AAN10998.1"/>
    <property type="molecule type" value="Genomic_DNA"/>
</dbReference>
<dbReference type="PIR" id="T00021">
    <property type="entry name" value="T00021"/>
</dbReference>
<dbReference type="RefSeq" id="NP_724068.1">
    <molecule id="O15943-8"/>
    <property type="nucleotide sequence ID" value="NM_165224.2"/>
</dbReference>
<dbReference type="RefSeq" id="NP_724069.1">
    <molecule id="O15943-3"/>
    <property type="nucleotide sequence ID" value="NM_165225.2"/>
</dbReference>
<dbReference type="RefSeq" id="NP_724070.1">
    <molecule id="O15943-6"/>
    <property type="nucleotide sequence ID" value="NM_165226.2"/>
</dbReference>
<dbReference type="RefSeq" id="NP_724071.1">
    <molecule id="O15943-1"/>
    <property type="nucleotide sequence ID" value="NM_165227.3"/>
</dbReference>
<dbReference type="RefSeq" id="NP_724072.1">
    <molecule id="O15943-4"/>
    <property type="nucleotide sequence ID" value="NM_165228.2"/>
</dbReference>
<dbReference type="RefSeq" id="NP_724073.1">
    <molecule id="O15943-2"/>
    <property type="nucleotide sequence ID" value="NM_165229.2"/>
</dbReference>
<dbReference type="RefSeq" id="NP_724074.1">
    <molecule id="O15943-7"/>
    <property type="nucleotide sequence ID" value="NM_165230.2"/>
</dbReference>
<dbReference type="RefSeq" id="NP_724075.1">
    <molecule id="O15943-5"/>
    <property type="nucleotide sequence ID" value="NM_165231.3"/>
</dbReference>
<dbReference type="PDB" id="3UBF">
    <property type="method" value="X-ray"/>
    <property type="resolution" value="2.50 A"/>
    <property type="chains" value="A=439-753"/>
</dbReference>
<dbReference type="PDB" id="3UBG">
    <property type="method" value="X-ray"/>
    <property type="resolution" value="2.50 A"/>
    <property type="chains" value="A/B=439-753"/>
</dbReference>
<dbReference type="PDB" id="3UBH">
    <property type="method" value="X-ray"/>
    <property type="resolution" value="2.70 A"/>
    <property type="chains" value="A=434-851"/>
</dbReference>
<dbReference type="PDBsum" id="3UBF"/>
<dbReference type="PDBsum" id="3UBG"/>
<dbReference type="PDBsum" id="3UBH"/>
<dbReference type="SMR" id="O15943"/>
<dbReference type="BioGRID" id="61066">
    <property type="interactions" value="19"/>
</dbReference>
<dbReference type="FunCoup" id="O15943">
    <property type="interactions" value="133"/>
</dbReference>
<dbReference type="IntAct" id="O15943">
    <property type="interactions" value="8"/>
</dbReference>
<dbReference type="STRING" id="7227.FBpp0099721"/>
<dbReference type="GlyCosmos" id="O15943">
    <property type="glycosylation" value="6 sites, No reported glycans"/>
</dbReference>
<dbReference type="GlyGen" id="O15943">
    <property type="glycosylation" value="7 sites"/>
</dbReference>
<dbReference type="PaxDb" id="7227-FBpp0099721"/>
<dbReference type="EnsemblMetazoa" id="FBtr0081013">
    <molecule id="O15943-2"/>
    <property type="protein sequence ID" value="FBpp0080566"/>
    <property type="gene ID" value="FBgn0015609"/>
</dbReference>
<dbReference type="EnsemblMetazoa" id="FBtr0081014">
    <molecule id="O15943-4"/>
    <property type="protein sequence ID" value="FBpp0080567"/>
    <property type="gene ID" value="FBgn0015609"/>
</dbReference>
<dbReference type="EnsemblMetazoa" id="FBtr0081015">
    <molecule id="O15943-1"/>
    <property type="protein sequence ID" value="FBpp0080568"/>
    <property type="gene ID" value="FBgn0015609"/>
</dbReference>
<dbReference type="EnsemblMetazoa" id="FBtr0081016">
    <molecule id="O15943-5"/>
    <property type="protein sequence ID" value="FBpp0080569"/>
    <property type="gene ID" value="FBgn0015609"/>
</dbReference>
<dbReference type="EnsemblMetazoa" id="FBtr0081017">
    <molecule id="O15943-6"/>
    <property type="protein sequence ID" value="FBpp0080570"/>
    <property type="gene ID" value="FBgn0015609"/>
</dbReference>
<dbReference type="EnsemblMetazoa" id="FBtr0081018">
    <molecule id="O15943-7"/>
    <property type="protein sequence ID" value="FBpp0080571"/>
    <property type="gene ID" value="FBgn0015609"/>
</dbReference>
<dbReference type="EnsemblMetazoa" id="FBtr0081019">
    <molecule id="O15943-8"/>
    <property type="protein sequence ID" value="FBpp0080572"/>
    <property type="gene ID" value="FBgn0015609"/>
</dbReference>
<dbReference type="EnsemblMetazoa" id="FBtr0081020">
    <molecule id="O15943-3"/>
    <property type="protein sequence ID" value="FBpp0080573"/>
    <property type="gene ID" value="FBgn0015609"/>
</dbReference>
<dbReference type="GeneID" id="35070"/>
<dbReference type="KEGG" id="dme:Dmel_CG7100"/>
<dbReference type="AGR" id="FB:FBgn0015609"/>
<dbReference type="CTD" id="35070"/>
<dbReference type="FlyBase" id="FBgn0015609">
    <property type="gene designation" value="CadN"/>
</dbReference>
<dbReference type="VEuPathDB" id="VectorBase:FBgn0015609"/>
<dbReference type="eggNOG" id="KOG3594">
    <property type="taxonomic scope" value="Eukaryota"/>
</dbReference>
<dbReference type="GeneTree" id="ENSGT00940000173178"/>
<dbReference type="HOGENOM" id="CLU_000347_1_0_1"/>
<dbReference type="InParanoid" id="O15943"/>
<dbReference type="OrthoDB" id="6079678at2759"/>
<dbReference type="PhylomeDB" id="O15943"/>
<dbReference type="SignaLink" id="O15943"/>
<dbReference type="BioGRID-ORCS" id="35070">
    <property type="hits" value="0 hits in 1 CRISPR screen"/>
</dbReference>
<dbReference type="EvolutionaryTrace" id="O15943"/>
<dbReference type="GenomeRNAi" id="35070"/>
<dbReference type="PRO" id="PR:O15943"/>
<dbReference type="Proteomes" id="UP000000803">
    <property type="component" value="Chromosome 2L"/>
</dbReference>
<dbReference type="Bgee" id="FBgn0015609">
    <property type="expression patterns" value="Expressed in antennal lobe projection neuron (Drosophila) in insect head and 230 other cell types or tissues"/>
</dbReference>
<dbReference type="ExpressionAtlas" id="O15943">
    <property type="expression patterns" value="baseline and differential"/>
</dbReference>
<dbReference type="GO" id="GO:0030424">
    <property type="term" value="C:axon"/>
    <property type="evidence" value="ECO:0000314"/>
    <property type="project" value="FlyBase"/>
</dbReference>
<dbReference type="GO" id="GO:0005911">
    <property type="term" value="C:cell-cell junction"/>
    <property type="evidence" value="ECO:0000314"/>
    <property type="project" value="FlyBase"/>
</dbReference>
<dbReference type="GO" id="GO:0030425">
    <property type="term" value="C:dendrite"/>
    <property type="evidence" value="ECO:0000314"/>
    <property type="project" value="FlyBase"/>
</dbReference>
<dbReference type="GO" id="GO:0016020">
    <property type="term" value="C:membrane"/>
    <property type="evidence" value="ECO:0000250"/>
    <property type="project" value="FlyBase"/>
</dbReference>
<dbReference type="GO" id="GO:0005886">
    <property type="term" value="C:plasma membrane"/>
    <property type="evidence" value="ECO:0000314"/>
    <property type="project" value="UniProtKB"/>
</dbReference>
<dbReference type="GO" id="GO:0045296">
    <property type="term" value="F:cadherin binding"/>
    <property type="evidence" value="ECO:0000353"/>
    <property type="project" value="FlyBase"/>
</dbReference>
<dbReference type="GO" id="GO:0005509">
    <property type="term" value="F:calcium ion binding"/>
    <property type="evidence" value="ECO:0000314"/>
    <property type="project" value="FlyBase"/>
</dbReference>
<dbReference type="GO" id="GO:0042803">
    <property type="term" value="F:protein homodimerization activity"/>
    <property type="evidence" value="ECO:0000353"/>
    <property type="project" value="FlyBase"/>
</dbReference>
<dbReference type="GO" id="GO:0048675">
    <property type="term" value="P:axon extension"/>
    <property type="evidence" value="ECO:0000315"/>
    <property type="project" value="FlyBase"/>
</dbReference>
<dbReference type="GO" id="GO:0048846">
    <property type="term" value="P:axon extension involved in axon guidance"/>
    <property type="evidence" value="ECO:0000315"/>
    <property type="project" value="FlyBase"/>
</dbReference>
<dbReference type="GO" id="GO:0007411">
    <property type="term" value="P:axon guidance"/>
    <property type="evidence" value="ECO:0000315"/>
    <property type="project" value="FlyBase"/>
</dbReference>
<dbReference type="GO" id="GO:0007412">
    <property type="term" value="P:axon target recognition"/>
    <property type="evidence" value="ECO:0000315"/>
    <property type="project" value="FlyBase"/>
</dbReference>
<dbReference type="GO" id="GO:0007413">
    <property type="term" value="P:axonal fasciculation"/>
    <property type="evidence" value="ECO:0000304"/>
    <property type="project" value="FlyBase"/>
</dbReference>
<dbReference type="GO" id="GO:0016339">
    <property type="term" value="P:calcium-dependent cell-cell adhesion via plasma membrane cell adhesion molecules"/>
    <property type="evidence" value="ECO:0000353"/>
    <property type="project" value="FlyBase"/>
</dbReference>
<dbReference type="GO" id="GO:0098609">
    <property type="term" value="P:cell-cell adhesion"/>
    <property type="evidence" value="ECO:0000318"/>
    <property type="project" value="GO_Central"/>
</dbReference>
<dbReference type="GO" id="GO:0044331">
    <property type="term" value="P:cell-cell adhesion mediated by cadherin"/>
    <property type="evidence" value="ECO:0000314"/>
    <property type="project" value="FlyBase"/>
</dbReference>
<dbReference type="GO" id="GO:0007156">
    <property type="term" value="P:homophilic cell adhesion via plasma membrane adhesion molecules"/>
    <property type="evidence" value="ECO:0000314"/>
    <property type="project" value="FlyBase"/>
</dbReference>
<dbReference type="GO" id="GO:0050774">
    <property type="term" value="P:negative regulation of dendrite morphogenesis"/>
    <property type="evidence" value="ECO:0000315"/>
    <property type="project" value="FlyBase"/>
</dbReference>
<dbReference type="GO" id="GO:0016318">
    <property type="term" value="P:ommatidial rotation"/>
    <property type="evidence" value="ECO:0000315"/>
    <property type="project" value="FlyBase"/>
</dbReference>
<dbReference type="GO" id="GO:0045467">
    <property type="term" value="P:R7 cell development"/>
    <property type="evidence" value="ECO:0000315"/>
    <property type="project" value="FlyBase"/>
</dbReference>
<dbReference type="GO" id="GO:0045463">
    <property type="term" value="P:R8 cell development"/>
    <property type="evidence" value="ECO:0000315"/>
    <property type="project" value="FlyBase"/>
</dbReference>
<dbReference type="GO" id="GO:0048841">
    <property type="term" value="P:regulation of axon extension involved in axon guidance"/>
    <property type="evidence" value="ECO:0000315"/>
    <property type="project" value="FlyBase"/>
</dbReference>
<dbReference type="GO" id="GO:0048814">
    <property type="term" value="P:regulation of dendrite morphogenesis"/>
    <property type="evidence" value="ECO:0000315"/>
    <property type="project" value="FlyBase"/>
</dbReference>
<dbReference type="GO" id="GO:0031290">
    <property type="term" value="P:retinal ganglion cell axon guidance"/>
    <property type="evidence" value="ECO:0000315"/>
    <property type="project" value="FlyBase"/>
</dbReference>
<dbReference type="CDD" id="cd11304">
    <property type="entry name" value="Cadherin_repeat"/>
    <property type="match status" value="15"/>
</dbReference>
<dbReference type="CDD" id="cd00053">
    <property type="entry name" value="EGF"/>
    <property type="match status" value="1"/>
</dbReference>
<dbReference type="CDD" id="cd00054">
    <property type="entry name" value="EGF_CA"/>
    <property type="match status" value="2"/>
</dbReference>
<dbReference type="CDD" id="cd00110">
    <property type="entry name" value="LamG"/>
    <property type="match status" value="2"/>
</dbReference>
<dbReference type="FunFam" id="2.60.40.60:FF:000182">
    <property type="entry name" value="Blast:Putative neural-cadherin 2"/>
    <property type="match status" value="1"/>
</dbReference>
<dbReference type="FunFam" id="4.10.900.10:FF:000001">
    <property type="entry name" value="Cadherin 2"/>
    <property type="match status" value="1"/>
</dbReference>
<dbReference type="FunFam" id="2.60.40.60:FF:000039">
    <property type="entry name" value="FAT atypical cadherin 3"/>
    <property type="match status" value="1"/>
</dbReference>
<dbReference type="FunFam" id="2.10.25.10:FF:000417">
    <property type="entry name" value="neural-cadherin isoform X1"/>
    <property type="match status" value="1"/>
</dbReference>
<dbReference type="FunFam" id="2.60.120.200:FF:000040">
    <property type="entry name" value="neural-cadherin isoform X1"/>
    <property type="match status" value="1"/>
</dbReference>
<dbReference type="FunFam" id="2.60.120.200:FF:000044">
    <property type="entry name" value="neural-cadherin isoform X1"/>
    <property type="match status" value="1"/>
</dbReference>
<dbReference type="FunFam" id="2.60.40.60:FF:000112">
    <property type="entry name" value="neural-cadherin isoform X1"/>
    <property type="match status" value="1"/>
</dbReference>
<dbReference type="FunFam" id="2.60.40.60:FF:000199">
    <property type="entry name" value="neural-cadherin isoform X1"/>
    <property type="match status" value="1"/>
</dbReference>
<dbReference type="FunFam" id="2.60.40.60:FF:000209">
    <property type="entry name" value="neural-cadherin isoform X1"/>
    <property type="match status" value="1"/>
</dbReference>
<dbReference type="FunFam" id="2.60.40.60:FF:000213">
    <property type="entry name" value="neural-cadherin isoform X1"/>
    <property type="match status" value="1"/>
</dbReference>
<dbReference type="FunFam" id="2.10.25.10:FF:000312">
    <property type="entry name" value="neural-cadherin isoform X10"/>
    <property type="match status" value="1"/>
</dbReference>
<dbReference type="FunFam" id="2.60.40.60:FF:000208">
    <property type="entry name" value="neural-cadherin isoform X11"/>
    <property type="match status" value="1"/>
</dbReference>
<dbReference type="FunFam" id="2.60.40.60:FF:000257">
    <property type="entry name" value="neural-cadherin isoform X11"/>
    <property type="match status" value="1"/>
</dbReference>
<dbReference type="FunFam" id="2.60.40.60:FF:000184">
    <property type="entry name" value="neural-cadherin isoform X12"/>
    <property type="match status" value="1"/>
</dbReference>
<dbReference type="FunFam" id="2.60.40.60:FF:000109">
    <property type="entry name" value="neural-cadherin isoform X2"/>
    <property type="match status" value="1"/>
</dbReference>
<dbReference type="FunFam" id="2.60.40.60:FF:000128">
    <property type="entry name" value="neural-cadherin isoform X2"/>
    <property type="match status" value="1"/>
</dbReference>
<dbReference type="FunFam" id="2.60.40.60:FF:000222">
    <property type="entry name" value="neural-cadherin isoform X3"/>
    <property type="match status" value="1"/>
</dbReference>
<dbReference type="FunFam" id="2.60.40.60:FF:000220">
    <property type="entry name" value="neural-cadherin isoform X5"/>
    <property type="match status" value="1"/>
</dbReference>
<dbReference type="FunFam" id="2.60.40.60:FF:000192">
    <property type="entry name" value="neural-cadherin isoform X8"/>
    <property type="match status" value="1"/>
</dbReference>
<dbReference type="FunFam" id="2.60.40.60:FF:000274">
    <property type="entry name" value="neural-cadherin isoform X9"/>
    <property type="match status" value="1"/>
</dbReference>
<dbReference type="FunFam" id="2.60.40.60:FF:000283">
    <property type="entry name" value="neural-cadherin isoform X9"/>
    <property type="match status" value="1"/>
</dbReference>
<dbReference type="Gene3D" id="2.60.120.200">
    <property type="match status" value="2"/>
</dbReference>
<dbReference type="Gene3D" id="2.60.40.60">
    <property type="entry name" value="Cadherins"/>
    <property type="match status" value="17"/>
</dbReference>
<dbReference type="Gene3D" id="2.10.25.10">
    <property type="entry name" value="Laminin"/>
    <property type="match status" value="2"/>
</dbReference>
<dbReference type="Gene3D" id="4.10.900.10">
    <property type="entry name" value="TCF3-CBD (Catenin binding domain)"/>
    <property type="match status" value="1"/>
</dbReference>
<dbReference type="InterPro" id="IPR039808">
    <property type="entry name" value="Cadherin"/>
</dbReference>
<dbReference type="InterPro" id="IPR002126">
    <property type="entry name" value="Cadherin-like_dom"/>
</dbReference>
<dbReference type="InterPro" id="IPR015919">
    <property type="entry name" value="Cadherin-like_sf"/>
</dbReference>
<dbReference type="InterPro" id="IPR020894">
    <property type="entry name" value="Cadherin_CS"/>
</dbReference>
<dbReference type="InterPro" id="IPR000233">
    <property type="entry name" value="Cadherin_Y-type_LIR"/>
</dbReference>
<dbReference type="InterPro" id="IPR027397">
    <property type="entry name" value="Catenin-bd_sf"/>
</dbReference>
<dbReference type="InterPro" id="IPR013320">
    <property type="entry name" value="ConA-like_dom_sf"/>
</dbReference>
<dbReference type="InterPro" id="IPR001881">
    <property type="entry name" value="EGF-like_Ca-bd_dom"/>
</dbReference>
<dbReference type="InterPro" id="IPR000742">
    <property type="entry name" value="EGF-like_dom"/>
</dbReference>
<dbReference type="InterPro" id="IPR009030">
    <property type="entry name" value="Growth_fac_rcpt_cys_sf"/>
</dbReference>
<dbReference type="InterPro" id="IPR001791">
    <property type="entry name" value="Laminin_G"/>
</dbReference>
<dbReference type="InterPro" id="IPR056370">
    <property type="entry name" value="Shg-like_Ig-like"/>
</dbReference>
<dbReference type="PANTHER" id="PTHR24027:SF438">
    <property type="entry name" value="CADHERIN 23"/>
    <property type="match status" value="1"/>
</dbReference>
<dbReference type="PANTHER" id="PTHR24027">
    <property type="entry name" value="CADHERIN-23"/>
    <property type="match status" value="1"/>
</dbReference>
<dbReference type="Pfam" id="PF01049">
    <property type="entry name" value="CADH_Y-type_LIR"/>
    <property type="match status" value="1"/>
</dbReference>
<dbReference type="Pfam" id="PF00028">
    <property type="entry name" value="Cadherin"/>
    <property type="match status" value="14"/>
</dbReference>
<dbReference type="Pfam" id="PF00008">
    <property type="entry name" value="EGF"/>
    <property type="match status" value="2"/>
</dbReference>
<dbReference type="Pfam" id="PF24811">
    <property type="entry name" value="Ig_Shg"/>
    <property type="match status" value="1"/>
</dbReference>
<dbReference type="Pfam" id="PF02210">
    <property type="entry name" value="Laminin_G_2"/>
    <property type="match status" value="2"/>
</dbReference>
<dbReference type="PRINTS" id="PR00205">
    <property type="entry name" value="CADHERIN"/>
</dbReference>
<dbReference type="SMART" id="SM00112">
    <property type="entry name" value="CA"/>
    <property type="match status" value="16"/>
</dbReference>
<dbReference type="SMART" id="SM00181">
    <property type="entry name" value="EGF"/>
    <property type="match status" value="4"/>
</dbReference>
<dbReference type="SMART" id="SM00179">
    <property type="entry name" value="EGF_CA"/>
    <property type="match status" value="3"/>
</dbReference>
<dbReference type="SMART" id="SM00282">
    <property type="entry name" value="LamG"/>
    <property type="match status" value="2"/>
</dbReference>
<dbReference type="SUPFAM" id="SSF49313">
    <property type="entry name" value="Cadherin-like"/>
    <property type="match status" value="18"/>
</dbReference>
<dbReference type="SUPFAM" id="SSF49899">
    <property type="entry name" value="Concanavalin A-like lectins/glucanases"/>
    <property type="match status" value="2"/>
</dbReference>
<dbReference type="SUPFAM" id="SSF57184">
    <property type="entry name" value="Growth factor receptor domain"/>
    <property type="match status" value="1"/>
</dbReference>
<dbReference type="PROSITE" id="PS00232">
    <property type="entry name" value="CADHERIN_1"/>
    <property type="match status" value="9"/>
</dbReference>
<dbReference type="PROSITE" id="PS50268">
    <property type="entry name" value="CADHERIN_2"/>
    <property type="match status" value="16"/>
</dbReference>
<dbReference type="PROSITE" id="PS00022">
    <property type="entry name" value="EGF_1"/>
    <property type="match status" value="3"/>
</dbReference>
<dbReference type="PROSITE" id="PS01186">
    <property type="entry name" value="EGF_2"/>
    <property type="match status" value="3"/>
</dbReference>
<dbReference type="PROSITE" id="PS50026">
    <property type="entry name" value="EGF_3"/>
    <property type="match status" value="3"/>
</dbReference>
<dbReference type="PROSITE" id="PS50025">
    <property type="entry name" value="LAM_G_DOMAIN"/>
    <property type="match status" value="2"/>
</dbReference>
<proteinExistence type="evidence at protein level"/>
<keyword id="KW-0002">3D-structure</keyword>
<keyword id="KW-0025">Alternative splicing</keyword>
<keyword id="KW-0106">Calcium</keyword>
<keyword id="KW-0130">Cell adhesion</keyword>
<keyword id="KW-1003">Cell membrane</keyword>
<keyword id="KW-1015">Disulfide bond</keyword>
<keyword id="KW-0245">EGF-like domain</keyword>
<keyword id="KW-0325">Glycoprotein</keyword>
<keyword id="KW-0472">Membrane</keyword>
<keyword id="KW-0479">Metal-binding</keyword>
<keyword id="KW-1185">Reference proteome</keyword>
<keyword id="KW-0677">Repeat</keyword>
<keyword id="KW-0732">Signal</keyword>
<keyword id="KW-0812">Transmembrane</keyword>
<keyword id="KW-1133">Transmembrane helix</keyword>
<sequence length="3097" mass="347204">MAARRCLNQLRQRYITNRFNICTCAIFLISLPFILAIEETTFAGLSAENAARMLAGSPGDVEKSSLSHHSEMSLVLPHDTYPGFSIKKFKTHPVKINGSSHSGAAAYHMLDTDYSKYFTVLEDGVVMTTADISPLVNRPVQLVVVEQTPNATNTHNLQLFVMHRNDMLRFSGSLLDASGEVRENQPAGTRVRGVPLMQAFSGSILDEELATPKKVRYTIIDGNVDDAFALQERKANKNIQISAKSLVINGDDESGVWLVTNRPLDREERAHYDLSVEASDVDGLDRTVSKIQITVLDENDNRPIFKSLDYKFAIAGQKSASMESNSSVTYQRFAIMGKVEATDADGDKIAYRLKSPSNVVIIVPQTGEIMLAGEPTSNELLIEVIAHDLRYPSLVSAKPAKVLLEFLAAEPVSFIMQHLEHDDINNHSHHREKRRVTRAVRPTKRIEFTEADGDTEGKSVFQLEKETDKETFKIRDDNPWVTVETNGAVRVKKKWDYEELGPEKTIDFWVIITNMGHNAGIKYTDNQRVIILVKDVNDEPPYFINRPLPMQAVVQLNAPPNTPVFTLQARDPDTDHNIHYFIVRDRTGGRFEVDERSGVVRTRGTDLFQLDMEYVLYVKAEDQNGKVDDRRFQSTPEERLSIVGGKRAPQFYMPSYEAEIPENQKKDSDIISIKAKSFADREIRYTLKAQGQGAGTFNIGPTSGIVKLAKELDFEDLRQPHVYSLIVTATEDSGGFSTSVDLTIRVTDVNDNAPKFELPDYQAHNVDEDIPLGTSILRVKAMDSDSGSNAEIEYLVSDDHFAVDSNGIIVNNKQLDADNNNAYYEFIVTAKDKGEPPKSGVATVRVYTKNKNDEEPKFSQQVYTPNVDENAGPNTLVTTVVASDKDGDNVRFGFVGGGTSSGQFVIEDITGVIRLHNKAISLDKDKYELNVTAMDDGSCCVNGDQTIHTSTAVVVVFITDVNDNKPVFKDCSTYYPKVEEGAPNGSPVIKVVATDEDKGVNGQVKYSIVQQPNQKGTKFTVDEETGEVSTNKVFDREGDDGKFVSVTVKATDQGDPSLEGVCSFTVEITDVNDNPPLFDRQKYVENVKQDASIGTNILRVSASDEDADNNGAIVYSLTAPFNPNDLEYFEIQAESGWIVLKKPLDRETYKLEAMAQDKGYPPLSRTVEVQIDVVDRANNPPVWDHTVYGPIYVKENMPVGGKVVSIKASSGIEGNPTVFYRLMPGSTAQTNKFHTFYLQQRPDNGDTWADIKVNHPLDYESIKEYNLTIRVENNGAQQLASEATVYIMLEDVNDEIPLFTEREQETVLEGEPIGTKVTQVNAIDKDGTFPNNQVYYYIVDSPRNEGKEFFEINLQSGEIFTKTVFDREKKGAYALEVEARDGAPSARPNSNGPNSVTKFIRIGIADKNDNPPYFDKSLYEAEVDENEDIQHTVLTVTAKDHDESSRIRYEITSGNIGGAFAVKNMTGAIYVAGALDYETRRRYELRLAASDNLKENYTTVIIHVKDVNDNPPVFERPTYRTQITEEDDRNLPKRVLQVTATDGDKDRPQNIVYFLTGQGIDPDNPANSKFDINRTTGEIFVLKPLDRDQPNGRPQWRFTVFAQDEGGEGLVGYADVQVNLKDINDNAPIFPQGVYFGNVTENGTAGMVVMTMTAVDYDDPNEGSNARLVYSIEKNVIEEETGSPIFEIEPDTGVIKTAVCCLDRERTPDYSIQVVAMDGGGLKGTGTASIRVKDINDMPPQFTKDEWFTEVDETDGTALPEMPILTVTVHDEDETNKFQYKVIDNSGYGADKFTMVRNNDGTGSLKIVQPLDYEDQLQSNGFRFRIQVNDKGEDNDNDKYHVAYSWVVVKLRDINDNKPHFERANVEVSVFEDTKVGTELEKFKATDPDQGGKSKVSYSIDRSSDRQRQFAINQNGSVTIQRSLDREVVPRHQVKILAIDDGSPPKTATATLTVIVQDINDNAPKFLKDYRPVLPEHVPPRKVVEILATDDDDRSKSNGPPFQFRLDPSADDIIRASFKVEQDQKGANGDGMAVISSLRSFDREQQKEYMIPIVIKDHGSPAMTGTSTLTVIIGDVNDNKMQPGSKDIFVYNYQGQSPDTPIGRVYVYDLDDWDLPDKKFYWEAMEHPRFKLDEDSGMVTMRAGTREGRYHLRFKVYDRKHTQTDIPANVTVTVREIPHEAVVNSGSVRLSGISDEDFIRVWNYRTQSMSRSKMDRFRDKLADLLNTERENVDIFSVQLKRKHPPLTDVRFSAHGSPYYKPVRLNGIVLMHREEIEKDVGINITMVGIDECLYENQMCEGSCTNSLEISPLPYMVNANKTALVGVRVDTIADCTCGARNFTKPESCRTTPCHNGGRCVDTRFGPHCSCPVGYTGPRCQQTTRSFRGNGWAWYPPLEMCDESHLSLEFITRKPDGLIIYNGPIVPPERDETLISDFIALELERGYPRLLIDFGSGTLELRVKTKKTLDDGEWHRIDLFWDTESIRMVVDFCKSAEIAEMEDGTPPEFDDMSCQARGQIPPFNEYLNVNAPLQVGGLYREQFDQSLYFWHYMPTAKGFDGCIRNLVHNSKLYDLAHPGLSRNSVAGCPQTEEVCAQTETTARCWEHGNCVGSLSEARCHCRPGWTGPACNIPTIPTTFKAQSYVKYALSFEPDRFSTQVQLRFRTREEYGELFRVSDQHNREYGILEIKDGHLHFRYNLNSLRTEEKDLWLNAIVVNDGQWHVVKVNRYGSAATLELDGGEGRRYNETFEFVGHQWLLVDKQEGVYAGGKAEYTGVRTFEVYADYQKSCLDDIRLEGKHLPLPPAMNGTQWGQATMARNLEKGCPSNKPCSNVICPDPFECVDLWNVYECTCGEGRIMSPDSKGCMDRNECLDMPCMNGATCINLEPRLRYRCICPDGFWGENCELVQEGQTLKLSMGALAAILVCLLIILILVLVFVVYNRRREAHIKYPGPDDDVRENIINYDDEGGGEDDMTAFDITPLQIPIGGPMPPELAPMKMPIMYPVMTLMPGQEPNVGMFIEEHKKRADGDPNAPPFDDLRNYAYEGGGSTAGSLSSLASGTDDEQQEYDYLGAWGPRFDKLANMYGPEAPNPHNTELEL</sequence>
<organism>
    <name type="scientific">Drosophila melanogaster</name>
    <name type="common">Fruit fly</name>
    <dbReference type="NCBI Taxonomy" id="7227"/>
    <lineage>
        <taxon>Eukaryota</taxon>
        <taxon>Metazoa</taxon>
        <taxon>Ecdysozoa</taxon>
        <taxon>Arthropoda</taxon>
        <taxon>Hexapoda</taxon>
        <taxon>Insecta</taxon>
        <taxon>Pterygota</taxon>
        <taxon>Neoptera</taxon>
        <taxon>Endopterygota</taxon>
        <taxon>Diptera</taxon>
        <taxon>Brachycera</taxon>
        <taxon>Muscomorpha</taxon>
        <taxon>Ephydroidea</taxon>
        <taxon>Drosophilidae</taxon>
        <taxon>Drosophila</taxon>
        <taxon>Sophophora</taxon>
    </lineage>
</organism>
<protein>
    <recommendedName>
        <fullName>Neural-cadherin</fullName>
    </recommendedName>
    <alternativeName>
        <fullName>Cadherin-N</fullName>
        <shortName>dN-cadherin</shortName>
    </alternativeName>
</protein>
<reference key="1">
    <citation type="journal article" date="1997" name="Neuron">
        <title>Axon patterning requires DN-cadherin, a novel neuronal adhesion receptor, in the Drosophila embryonic CNS.</title>
        <authorList>
            <person name="Iwai Y."/>
            <person name="Usui T."/>
            <person name="Hirano S."/>
            <person name="Steward R."/>
            <person name="Takeichi M."/>
            <person name="Uemura T."/>
        </authorList>
    </citation>
    <scope>NUCLEOTIDE SEQUENCE [MRNA] (ISOFORM D)</scope>
    <source>
        <tissue>Embryo</tissue>
        <tissue>Head</tissue>
    </source>
</reference>
<reference key="2">
    <citation type="journal article" date="2000" name="Science">
        <title>The genome sequence of Drosophila melanogaster.</title>
        <authorList>
            <person name="Adams M.D."/>
            <person name="Celniker S.E."/>
            <person name="Holt R.A."/>
            <person name="Evans C.A."/>
            <person name="Gocayne J.D."/>
            <person name="Amanatides P.G."/>
            <person name="Scherer S.E."/>
            <person name="Li P.W."/>
            <person name="Hoskins R.A."/>
            <person name="Galle R.F."/>
            <person name="George R.A."/>
            <person name="Lewis S.E."/>
            <person name="Richards S."/>
            <person name="Ashburner M."/>
            <person name="Henderson S.N."/>
            <person name="Sutton G.G."/>
            <person name="Wortman J.R."/>
            <person name="Yandell M.D."/>
            <person name="Zhang Q."/>
            <person name="Chen L.X."/>
            <person name="Brandon R.C."/>
            <person name="Rogers Y.-H.C."/>
            <person name="Blazej R.G."/>
            <person name="Champe M."/>
            <person name="Pfeiffer B.D."/>
            <person name="Wan K.H."/>
            <person name="Doyle C."/>
            <person name="Baxter E.G."/>
            <person name="Helt G."/>
            <person name="Nelson C.R."/>
            <person name="Miklos G.L.G."/>
            <person name="Abril J.F."/>
            <person name="Agbayani A."/>
            <person name="An H.-J."/>
            <person name="Andrews-Pfannkoch C."/>
            <person name="Baldwin D."/>
            <person name="Ballew R.M."/>
            <person name="Basu A."/>
            <person name="Baxendale J."/>
            <person name="Bayraktaroglu L."/>
            <person name="Beasley E.M."/>
            <person name="Beeson K.Y."/>
            <person name="Benos P.V."/>
            <person name="Berman B.P."/>
            <person name="Bhandari D."/>
            <person name="Bolshakov S."/>
            <person name="Borkova D."/>
            <person name="Botchan M.R."/>
            <person name="Bouck J."/>
            <person name="Brokstein P."/>
            <person name="Brottier P."/>
            <person name="Burtis K.C."/>
            <person name="Busam D.A."/>
            <person name="Butler H."/>
            <person name="Cadieu E."/>
            <person name="Center A."/>
            <person name="Chandra I."/>
            <person name="Cherry J.M."/>
            <person name="Cawley S."/>
            <person name="Dahlke C."/>
            <person name="Davenport L.B."/>
            <person name="Davies P."/>
            <person name="de Pablos B."/>
            <person name="Delcher A."/>
            <person name="Deng Z."/>
            <person name="Mays A.D."/>
            <person name="Dew I."/>
            <person name="Dietz S.M."/>
            <person name="Dodson K."/>
            <person name="Doup L.E."/>
            <person name="Downes M."/>
            <person name="Dugan-Rocha S."/>
            <person name="Dunkov B.C."/>
            <person name="Dunn P."/>
            <person name="Durbin K.J."/>
            <person name="Evangelista C.C."/>
            <person name="Ferraz C."/>
            <person name="Ferriera S."/>
            <person name="Fleischmann W."/>
            <person name="Fosler C."/>
            <person name="Gabrielian A.E."/>
            <person name="Garg N.S."/>
            <person name="Gelbart W.M."/>
            <person name="Glasser K."/>
            <person name="Glodek A."/>
            <person name="Gong F."/>
            <person name="Gorrell J.H."/>
            <person name="Gu Z."/>
            <person name="Guan P."/>
            <person name="Harris M."/>
            <person name="Harris N.L."/>
            <person name="Harvey D.A."/>
            <person name="Heiman T.J."/>
            <person name="Hernandez J.R."/>
            <person name="Houck J."/>
            <person name="Hostin D."/>
            <person name="Houston K.A."/>
            <person name="Howland T.J."/>
            <person name="Wei M.-H."/>
            <person name="Ibegwam C."/>
            <person name="Jalali M."/>
            <person name="Kalush F."/>
            <person name="Karpen G.H."/>
            <person name="Ke Z."/>
            <person name="Kennison J.A."/>
            <person name="Ketchum K.A."/>
            <person name="Kimmel B.E."/>
            <person name="Kodira C.D."/>
            <person name="Kraft C.L."/>
            <person name="Kravitz S."/>
            <person name="Kulp D."/>
            <person name="Lai Z."/>
            <person name="Lasko P."/>
            <person name="Lei Y."/>
            <person name="Levitsky A.A."/>
            <person name="Li J.H."/>
            <person name="Li Z."/>
            <person name="Liang Y."/>
            <person name="Lin X."/>
            <person name="Liu X."/>
            <person name="Mattei B."/>
            <person name="McIntosh T.C."/>
            <person name="McLeod M.P."/>
            <person name="McPherson D."/>
            <person name="Merkulov G."/>
            <person name="Milshina N.V."/>
            <person name="Mobarry C."/>
            <person name="Morris J."/>
            <person name="Moshrefi A."/>
            <person name="Mount S.M."/>
            <person name="Moy M."/>
            <person name="Murphy B."/>
            <person name="Murphy L."/>
            <person name="Muzny D.M."/>
            <person name="Nelson D.L."/>
            <person name="Nelson D.R."/>
            <person name="Nelson K.A."/>
            <person name="Nixon K."/>
            <person name="Nusskern D.R."/>
            <person name="Pacleb J.M."/>
            <person name="Palazzolo M."/>
            <person name="Pittman G.S."/>
            <person name="Pan S."/>
            <person name="Pollard J."/>
            <person name="Puri V."/>
            <person name="Reese M.G."/>
            <person name="Reinert K."/>
            <person name="Remington K."/>
            <person name="Saunders R.D.C."/>
            <person name="Scheeler F."/>
            <person name="Shen H."/>
            <person name="Shue B.C."/>
            <person name="Siden-Kiamos I."/>
            <person name="Simpson M."/>
            <person name="Skupski M.P."/>
            <person name="Smith T.J."/>
            <person name="Spier E."/>
            <person name="Spradling A.C."/>
            <person name="Stapleton M."/>
            <person name="Strong R."/>
            <person name="Sun E."/>
            <person name="Svirskas R."/>
            <person name="Tector C."/>
            <person name="Turner R."/>
            <person name="Venter E."/>
            <person name="Wang A.H."/>
            <person name="Wang X."/>
            <person name="Wang Z.-Y."/>
            <person name="Wassarman D.A."/>
            <person name="Weinstock G.M."/>
            <person name="Weissenbach J."/>
            <person name="Williams S.M."/>
            <person name="Woodage T."/>
            <person name="Worley K.C."/>
            <person name="Wu D."/>
            <person name="Yang S."/>
            <person name="Yao Q.A."/>
            <person name="Ye J."/>
            <person name="Yeh R.-F."/>
            <person name="Zaveri J.S."/>
            <person name="Zhan M."/>
            <person name="Zhang G."/>
            <person name="Zhao Q."/>
            <person name="Zheng L."/>
            <person name="Zheng X.H."/>
            <person name="Zhong F.N."/>
            <person name="Zhong W."/>
            <person name="Zhou X."/>
            <person name="Zhu S.C."/>
            <person name="Zhu X."/>
            <person name="Smith H.O."/>
            <person name="Gibbs R.A."/>
            <person name="Myers E.W."/>
            <person name="Rubin G.M."/>
            <person name="Venter J.C."/>
        </authorList>
    </citation>
    <scope>NUCLEOTIDE SEQUENCE [LARGE SCALE GENOMIC DNA]</scope>
    <source>
        <strain>Berkeley</strain>
    </source>
</reference>
<reference key="3">
    <citation type="journal article" date="2002" name="Genome Biol.">
        <title>Annotation of the Drosophila melanogaster euchromatic genome: a systematic review.</title>
        <authorList>
            <person name="Misra S."/>
            <person name="Crosby M.A."/>
            <person name="Mungall C.J."/>
            <person name="Matthews B.B."/>
            <person name="Campbell K.S."/>
            <person name="Hradecky P."/>
            <person name="Huang Y."/>
            <person name="Kaminker J.S."/>
            <person name="Millburn G.H."/>
            <person name="Prochnik S.E."/>
            <person name="Smith C.D."/>
            <person name="Tupy J.L."/>
            <person name="Whitfield E.J."/>
            <person name="Bayraktaroglu L."/>
            <person name="Berman B.P."/>
            <person name="Bettencourt B.R."/>
            <person name="Celniker S.E."/>
            <person name="de Grey A.D.N.J."/>
            <person name="Drysdale R.A."/>
            <person name="Harris N.L."/>
            <person name="Richter J."/>
            <person name="Russo S."/>
            <person name="Schroeder A.J."/>
            <person name="Shu S.Q."/>
            <person name="Stapleton M."/>
            <person name="Yamada C."/>
            <person name="Ashburner M."/>
            <person name="Gelbart W.M."/>
            <person name="Rubin G.M."/>
            <person name="Lewis S.E."/>
        </authorList>
    </citation>
    <scope>GENOME REANNOTATION</scope>
    <scope>ALTERNATIVE SPLICING</scope>
    <source>
        <strain>Berkeley</strain>
    </source>
</reference>
<reference key="4">
    <citation type="journal article" date="1998" name="Curr. Biol.">
        <title>Roles of Armadillo, a Drosophila catenin, during central nervous system development.</title>
        <authorList>
            <person name="Loureiro J."/>
            <person name="Peifer M."/>
        </authorList>
    </citation>
    <scope>INTERACTION WITH ARM</scope>
</reference>
<accession>O15943</accession>
<accession>Q9VJB7</accession>
<feature type="signal peptide" evidence="2">
    <location>
        <begin position="1"/>
        <end position="36"/>
    </location>
</feature>
<feature type="propeptide" id="PRO_0000003881">
    <location>
        <begin position="37"/>
        <end status="unknown"/>
    </location>
</feature>
<feature type="chain" id="PRO_0000003882" description="Neural-cadherin">
    <location>
        <begin status="unknown"/>
        <end position="3097"/>
    </location>
</feature>
<feature type="topological domain" description="Extracellular" evidence="2">
    <location>
        <begin status="unknown"/>
        <end position="2916"/>
    </location>
</feature>
<feature type="transmembrane region" description="Helical" evidence="2">
    <location>
        <begin position="2917"/>
        <end position="2937"/>
    </location>
</feature>
<feature type="topological domain" description="Cytoplasmic" evidence="2">
    <location>
        <begin position="2938"/>
        <end position="3097"/>
    </location>
</feature>
<feature type="domain" description="Cadherin 1" evidence="3">
    <location>
        <begin position="181"/>
        <end position="305"/>
    </location>
</feature>
<feature type="domain" description="Cadherin 2" evidence="3">
    <location>
        <begin position="430"/>
        <end position="543"/>
    </location>
</feature>
<feature type="domain" description="Cadherin 3" evidence="3">
    <location>
        <begin position="554"/>
        <end position="651"/>
    </location>
</feature>
<feature type="domain" description="Cadherin 4" evidence="3">
    <location>
        <begin position="660"/>
        <end position="756"/>
    </location>
</feature>
<feature type="domain" description="Cadherin 5" evidence="3">
    <location>
        <begin position="766"/>
        <end position="858"/>
    </location>
</feature>
<feature type="domain" description="Cadherin 6" evidence="3">
    <location>
        <begin position="867"/>
        <end position="968"/>
    </location>
</feature>
<feature type="domain" description="Cadherin 7" evidence="3">
    <location>
        <begin position="978"/>
        <end position="1078"/>
    </location>
</feature>
<feature type="domain" description="Cadherin 8" evidence="3">
    <location>
        <begin position="1087"/>
        <end position="1183"/>
    </location>
</feature>
<feature type="domain" description="Cadherin 9" evidence="3">
    <location>
        <begin position="1193"/>
        <end position="1299"/>
    </location>
</feature>
<feature type="domain" description="Cadherin 10" evidence="3">
    <location>
        <begin position="1307"/>
        <end position="1414"/>
    </location>
</feature>
<feature type="domain" description="Cadherin 11" evidence="3">
    <location>
        <begin position="1423"/>
        <end position="1514"/>
    </location>
</feature>
<feature type="domain" description="Cadherin 12" evidence="3">
    <location>
        <begin position="1523"/>
        <end position="1630"/>
    </location>
</feature>
<feature type="domain" description="Cadherin 13" evidence="3">
    <location>
        <begin position="1639"/>
        <end position="1742"/>
    </location>
</feature>
<feature type="domain" description="Cadherin 14" evidence="3">
    <location>
        <begin position="1749"/>
        <end position="1861"/>
    </location>
</feature>
<feature type="domain" description="Cadherin 15" evidence="3">
    <location>
        <begin position="1870"/>
        <end position="1966"/>
    </location>
</feature>
<feature type="domain" description="Cadherin 16" evidence="3">
    <location>
        <begin position="1974"/>
        <end position="2085"/>
    </location>
</feature>
<feature type="domain" description="EGF-like 1" evidence="4">
    <location>
        <begin position="2346"/>
        <end position="2377"/>
    </location>
</feature>
<feature type="domain" description="Laminin G-like 1" evidence="5">
    <location>
        <begin position="2379"/>
        <end position="2585"/>
    </location>
</feature>
<feature type="domain" description="EGF-like 2" evidence="4">
    <location>
        <begin position="2592"/>
        <end position="2627"/>
    </location>
</feature>
<feature type="domain" description="Laminin G-like 2" evidence="5">
    <location>
        <begin position="2631"/>
        <end position="2822"/>
    </location>
</feature>
<feature type="domain" description="EGF-like 3" evidence="4">
    <location>
        <begin position="2869"/>
        <end position="2902"/>
    </location>
</feature>
<feature type="glycosylation site" description="N-linked (GlcNAc...) asparagine" evidence="2">
    <location>
        <position position="97"/>
    </location>
</feature>
<feature type="glycosylation site" description="N-linked (GlcNAc...) asparagine" evidence="2">
    <location>
        <position position="150"/>
    </location>
</feature>
<feature type="glycosylation site" description="N-linked (GlcNAc...) asparagine" evidence="2">
    <location>
        <position position="325"/>
    </location>
</feature>
<feature type="glycosylation site" description="N-linked (GlcNAc...) asparagine" evidence="2">
    <location>
        <position position="426"/>
    </location>
</feature>
<feature type="glycosylation site" description="N-linked (GlcNAc...) asparagine" evidence="2">
    <location>
        <position position="930"/>
    </location>
</feature>
<feature type="glycosylation site" description="N-linked (GlcNAc...) asparagine" evidence="2">
    <location>
        <position position="1266"/>
    </location>
</feature>
<feature type="disulfide bond" evidence="2">
    <location>
        <begin position="2346"/>
        <end position="2357"/>
    </location>
</feature>
<feature type="disulfide bond" evidence="2">
    <location>
        <begin position="2351"/>
        <end position="2366"/>
    </location>
</feature>
<feature type="disulfide bond" evidence="2">
    <location>
        <begin position="2368"/>
        <end position="2377"/>
    </location>
</feature>
<feature type="disulfide bond" evidence="1">
    <location>
        <begin position="2559"/>
        <end position="2585"/>
    </location>
</feature>
<feature type="disulfide bond" evidence="2">
    <location>
        <begin position="2592"/>
        <end position="2607"/>
    </location>
</feature>
<feature type="disulfide bond" evidence="2">
    <location>
        <begin position="2601"/>
        <end position="2616"/>
    </location>
</feature>
<feature type="disulfide bond" evidence="2">
    <location>
        <begin position="2618"/>
        <end position="2627"/>
    </location>
</feature>
<feature type="disulfide bond" evidence="1">
    <location>
        <begin position="2787"/>
        <end position="2822"/>
    </location>
</feature>
<feature type="disulfide bond" evidence="2">
    <location>
        <begin position="2869"/>
        <end position="2880"/>
    </location>
</feature>
<feature type="disulfide bond" evidence="2">
    <location>
        <begin position="2874"/>
        <end position="2891"/>
    </location>
</feature>
<feature type="disulfide bond" evidence="2">
    <location>
        <begin position="2893"/>
        <end position="2902"/>
    </location>
</feature>
<feature type="splice variant" id="VSP_000667" description="In isoform A, isoform C, isoform E and isoform G." evidence="6">
    <original>ETYKLEAMAQDKGYPPLSRTVEVQIDVVDRANNPPVWDHTVYGPIYVKENMPVGGKVVSI</original>
    <variation>DRYRLRVSASDKGTPASAADVDVELDVVDRNNKPPIWDKSIYGPIHIRENVTVGTVVTSV</variation>
    <location>
        <begin position="1147"/>
        <end position="1206"/>
    </location>
</feature>
<feature type="splice variant" id="VSP_000668" description="In isoform A, isoform B, isoform C and isoform H." evidence="6">
    <original>RLAASDNLKENYTTVIIHVKDVNDNPPVFERPTYRTQITEEDDRNLPKRVL</original>
    <variation>KLVASDSLNENQTTIVINVRDVNDLPPQFPQTSYERTLDEGMTNTPFTIM</variation>
    <location>
        <begin position="1486"/>
        <end position="1536"/>
    </location>
</feature>
<feature type="splice variant" id="VSP_000669" description="In isoform C, isoform F, isoform G and isoform H." evidence="6">
    <original>GEGRIMSPDSKGCMDRNECLDMPCMNGATCINLEPRLRYRCICPDGFWGENCELVQEGQTLKLSMGALAAILVCLLIILI</original>
    <variation>PAGYKSSGSTCVNDNECLLFPCRNGGRCRDHHPPKKYECHCPMGFTGMHCELELLASGVLTPSRDFIVALALCLGTLIL</variation>
    <location>
        <begin position="2851"/>
        <end position="2930"/>
    </location>
</feature>
<feature type="sequence variant" description="In allele CADN-M12; muscle defects.">
    <original>E</original>
    <variation>K</variation>
    <location>
        <position position="1425"/>
    </location>
</feature>
<feature type="sequence conflict" description="In Ref. 1; BAA22151." evidence="6" ref="1">
    <original>P</original>
    <variation>A</variation>
    <location>
        <position position="1342"/>
    </location>
</feature>
<feature type="sequence conflict" description="In Ref. 1; BAA22151." evidence="6" ref="1">
    <original>S</original>
    <variation>T</variation>
    <location>
        <position position="2786"/>
    </location>
</feature>
<feature type="strand" evidence="7">
    <location>
        <begin position="440"/>
        <end position="450"/>
    </location>
</feature>
<feature type="helix" evidence="7">
    <location>
        <begin position="451"/>
        <end position="453"/>
    </location>
</feature>
<feature type="strand" evidence="7">
    <location>
        <begin position="459"/>
        <end position="462"/>
    </location>
</feature>
<feature type="strand" evidence="8">
    <location>
        <begin position="466"/>
        <end position="469"/>
    </location>
</feature>
<feature type="strand" evidence="7">
    <location>
        <begin position="471"/>
        <end position="476"/>
    </location>
</feature>
<feature type="strand" evidence="7">
    <location>
        <begin position="479"/>
        <end position="483"/>
    </location>
</feature>
<feature type="strand" evidence="7">
    <location>
        <begin position="487"/>
        <end position="493"/>
    </location>
</feature>
<feature type="helix" evidence="7">
    <location>
        <begin position="497"/>
        <end position="499"/>
    </location>
</feature>
<feature type="strand" evidence="7">
    <location>
        <begin position="505"/>
        <end position="513"/>
    </location>
</feature>
<feature type="strand" evidence="9">
    <location>
        <begin position="519"/>
        <end position="521"/>
    </location>
</feature>
<feature type="strand" evidence="7">
    <location>
        <begin position="525"/>
        <end position="534"/>
    </location>
</feature>
<feature type="strand" evidence="7">
    <location>
        <begin position="546"/>
        <end position="554"/>
    </location>
</feature>
<feature type="strand" evidence="7">
    <location>
        <begin position="563"/>
        <end position="566"/>
    </location>
</feature>
<feature type="strand" evidence="7">
    <location>
        <begin position="578"/>
        <end position="589"/>
    </location>
</feature>
<feature type="strand" evidence="7">
    <location>
        <begin position="591"/>
        <end position="593"/>
    </location>
</feature>
<feature type="turn" evidence="7">
    <location>
        <begin position="595"/>
        <end position="597"/>
    </location>
</feature>
<feature type="strand" evidence="7">
    <location>
        <begin position="599"/>
        <end position="602"/>
    </location>
</feature>
<feature type="strand" evidence="9">
    <location>
        <begin position="604"/>
        <end position="606"/>
    </location>
</feature>
<feature type="strand" evidence="7">
    <location>
        <begin position="613"/>
        <end position="623"/>
    </location>
</feature>
<feature type="strand" evidence="8">
    <location>
        <begin position="632"/>
        <end position="634"/>
    </location>
</feature>
<feature type="strand" evidence="7">
    <location>
        <begin position="638"/>
        <end position="645"/>
    </location>
</feature>
<feature type="strand" evidence="7">
    <location>
        <begin position="650"/>
        <end position="661"/>
    </location>
</feature>
<feature type="strand" evidence="7">
    <location>
        <begin position="669"/>
        <end position="672"/>
    </location>
</feature>
<feature type="strand" evidence="7">
    <location>
        <begin position="683"/>
        <end position="692"/>
    </location>
</feature>
<feature type="turn" evidence="7">
    <location>
        <begin position="694"/>
        <end position="696"/>
    </location>
</feature>
<feature type="strand" evidence="7">
    <location>
        <begin position="697"/>
        <end position="699"/>
    </location>
</feature>
<feature type="turn" evidence="7">
    <location>
        <begin position="701"/>
        <end position="703"/>
    </location>
</feature>
<feature type="strand" evidence="7">
    <location>
        <begin position="705"/>
        <end position="708"/>
    </location>
</feature>
<feature type="strand" evidence="7">
    <location>
        <begin position="721"/>
        <end position="735"/>
    </location>
</feature>
<feature type="strand" evidence="7">
    <location>
        <begin position="737"/>
        <end position="747"/>
    </location>
</feature>
<feature type="strand" evidence="9">
    <location>
        <begin position="755"/>
        <end position="767"/>
    </location>
</feature>
<feature type="strand" evidence="9">
    <location>
        <begin position="775"/>
        <end position="778"/>
    </location>
</feature>
<feature type="helix" evidence="9">
    <location>
        <begin position="787"/>
        <end position="790"/>
    </location>
</feature>
<feature type="strand" evidence="9">
    <location>
        <begin position="792"/>
        <end position="797"/>
    </location>
</feature>
<feature type="strand" evidence="9">
    <location>
        <begin position="801"/>
        <end position="803"/>
    </location>
</feature>
<feature type="strand" evidence="9">
    <location>
        <begin position="808"/>
        <end position="811"/>
    </location>
</feature>
<feature type="strand" evidence="9">
    <location>
        <begin position="815"/>
        <end position="818"/>
    </location>
</feature>
<feature type="strand" evidence="9">
    <location>
        <begin position="823"/>
        <end position="832"/>
    </location>
</feature>
<feature type="strand" evidence="9">
    <location>
        <begin position="839"/>
        <end position="849"/>
    </location>
</feature>
<evidence type="ECO:0000250" key="1"/>
<evidence type="ECO:0000255" key="2"/>
<evidence type="ECO:0000255" key="3">
    <source>
        <dbReference type="PROSITE-ProRule" id="PRU00043"/>
    </source>
</evidence>
<evidence type="ECO:0000255" key="4">
    <source>
        <dbReference type="PROSITE-ProRule" id="PRU00076"/>
    </source>
</evidence>
<evidence type="ECO:0000255" key="5">
    <source>
        <dbReference type="PROSITE-ProRule" id="PRU00122"/>
    </source>
</evidence>
<evidence type="ECO:0000305" key="6"/>
<evidence type="ECO:0007829" key="7">
    <source>
        <dbReference type="PDB" id="3UBF"/>
    </source>
</evidence>
<evidence type="ECO:0007829" key="8">
    <source>
        <dbReference type="PDB" id="3UBG"/>
    </source>
</evidence>
<evidence type="ECO:0007829" key="9">
    <source>
        <dbReference type="PDB" id="3UBH"/>
    </source>
</evidence>
<name>CADN_DROME</name>
<gene>
    <name type="primary">CadN</name>
    <name type="ORF">CG7100</name>
</gene>
<comment type="function">
    <text>Cadherins are calcium-dependent cell adhesion proteins. They preferentially interact with themselves in a homophilic manner in connecting cells; cadherins may thus contribute to the sorting of heterogeneous cell types. May associate with arm neural isoform and participate in the transmission of developmental information.</text>
</comment>
<comment type="subcellular location">
    <subcellularLocation>
        <location evidence="6">Cell membrane</location>
        <topology evidence="6">Single-pass type I membrane protein</topology>
    </subcellularLocation>
</comment>
<comment type="alternative products">
    <event type="alternative splicing"/>
    <isoform>
        <id>O15943-1</id>
        <name>D</name>
        <sequence type="displayed"/>
    </isoform>
    <isoform>
        <id>O15943-2</id>
        <name>A</name>
        <sequence type="described" ref="VSP_000667 VSP_000668"/>
    </isoform>
    <isoform>
        <id>O15943-3</id>
        <name>B</name>
        <sequence type="described" ref="VSP_000668"/>
    </isoform>
    <isoform>
        <id>O15943-4</id>
        <name>C</name>
        <sequence type="described" ref="VSP_000667 VSP_000668 VSP_000669"/>
    </isoform>
    <isoform>
        <id>O15943-5</id>
        <name>E</name>
        <sequence type="described" ref="VSP_000667"/>
    </isoform>
    <isoform>
        <id>O15943-6</id>
        <name>F</name>
        <sequence type="described" ref="VSP_000669"/>
    </isoform>
    <isoform>
        <id>O15943-7</id>
        <name>G</name>
        <sequence type="described" ref="VSP_000667 VSP_000669"/>
    </isoform>
    <isoform>
        <id>O15943-8</id>
        <name>H</name>
        <sequence type="described" ref="VSP_000668 VSP_000669"/>
    </isoform>
    <text>Experimental confirmation may be lacking for some isoforms.</text>
</comment>
<comment type="tissue specificity">
    <text>In the embryo, the protein first appears in the mesoderm at stage 9 and is present in the myoblasts and muscle fibers by stage 12 and stage 14, respectively. At stage 12 the protein is also located in the axons of the entire CNS, but not in the glial cells. In third instar larvae protein is expressed in the CNS neuropile, photoreceptor axons and precursors of adult muscles.</text>
</comment>
<comment type="domain">
    <text evidence="1">Three calcium ions are usually bound at the interface of each cadherin domain and rigidify the connections, imparting a strong curvature to the full-length ectodomain.</text>
</comment>